<keyword id="KW-0030">Aminoacyl-tRNA synthetase</keyword>
<keyword id="KW-0067">ATP-binding</keyword>
<keyword id="KW-0963">Cytoplasm</keyword>
<keyword id="KW-0436">Ligase</keyword>
<keyword id="KW-0547">Nucleotide-binding</keyword>
<keyword id="KW-0648">Protein biosynthesis</keyword>
<keyword id="KW-1185">Reference proteome</keyword>
<comment type="catalytic activity">
    <reaction>
        <text>tRNA(Met) + L-methionine + ATP = L-methionyl-tRNA(Met) + AMP + diphosphate</text>
        <dbReference type="Rhea" id="RHEA:13481"/>
        <dbReference type="Rhea" id="RHEA-COMP:9667"/>
        <dbReference type="Rhea" id="RHEA-COMP:9698"/>
        <dbReference type="ChEBI" id="CHEBI:30616"/>
        <dbReference type="ChEBI" id="CHEBI:33019"/>
        <dbReference type="ChEBI" id="CHEBI:57844"/>
        <dbReference type="ChEBI" id="CHEBI:78442"/>
        <dbReference type="ChEBI" id="CHEBI:78530"/>
        <dbReference type="ChEBI" id="CHEBI:456215"/>
        <dbReference type="EC" id="6.1.1.10"/>
    </reaction>
</comment>
<comment type="subcellular location">
    <subcellularLocation>
        <location evidence="1">Cytoplasm</location>
    </subcellularLocation>
</comment>
<comment type="similarity">
    <text evidence="2">Belongs to the class-I aminoacyl-tRNA synthetase family.</text>
</comment>
<comment type="sequence caution" evidence="2">
    <conflict type="frameshift">
        <sequence resource="EMBL-CDS" id="EEQ82257"/>
    </conflict>
</comment>
<evidence type="ECO:0000250" key="1"/>
<evidence type="ECO:0000305" key="2"/>
<accession>C4V943</accession>
<gene>
    <name type="ORF">NCER_101052</name>
</gene>
<reference key="1">
    <citation type="journal article" date="2009" name="PLoS Pathog.">
        <title>Genomic analyses of the microsporidian Nosema ceranae, an emergent pathogen of honey bees.</title>
        <authorList>
            <person name="Cornman R.S."/>
            <person name="Chen Y.P."/>
            <person name="Schatz M.C."/>
            <person name="Street C."/>
            <person name="Zhao Y."/>
            <person name="Desany B."/>
            <person name="Egholm M."/>
            <person name="Hutchison S."/>
            <person name="Pettis J.S."/>
            <person name="Lipkin W.I."/>
            <person name="Evans J.D."/>
        </authorList>
    </citation>
    <scope>NUCLEOTIDE SEQUENCE [LARGE SCALE GENOMIC DNA]</scope>
    <source>
        <strain>BRL01</strain>
    </source>
</reference>
<organism>
    <name type="scientific">Vairimorpha ceranae (strain BRL01)</name>
    <name type="common">Microsporidian parasite</name>
    <name type="synonym">Nosema ceranae</name>
    <dbReference type="NCBI Taxonomy" id="578460"/>
    <lineage>
        <taxon>Eukaryota</taxon>
        <taxon>Fungi</taxon>
        <taxon>Fungi incertae sedis</taxon>
        <taxon>Microsporidia</taxon>
        <taxon>Nosematidae</taxon>
        <taxon>Vairimorpha</taxon>
    </lineage>
</organism>
<sequence length="560" mass="65264">MKKKFLVKKIITSALPYVNNQPHLGNIIGCVLSADMYARFCRKNNEDVVFLSGTDEYGTAIEMAAFAQNKTPLQICEENRIIHKKIYDWFNIDFDFFGHTTSTAHTKNVQDFFNKIHNNGFFTEQEIEQFFCDKCQIFLADRYVVGTCKFCKYTDAKGDQCDGCGHTYKSLDLIDAKCTLCHSFPNIKSTRHLFFDFNNFKDKLQKLFNTNSQYWSENGKQITKSWLDQELLPRCMTRDLKNRWGVPVPLKDFEEKVFYVWFDAVIGYFTFYKEYVAARSESKELDKNNVFATDNILQDCELVQFMGKDNVFFHTIVFPSLIFATNDSYPLIKKLSVTEFLLFENEKFSKSRGHGIFGLDLVDNTMGQSCLWRYYLAKIRPEKCDSNFSFTHFTNVIDADLNNNIGNFCNRVLKYIKNKNDKLISIDKLEHRDDLMVQTIDKIYKEYLTSFSAIRIREALEKILEISKVGNEYVQQVVSSKIEVPKGFQVAFSIVVLIGQLLEPFIPVSSEKLLKMCNRKKENFCESFYIIKSAEIGDDIKPLFNKLDDSLIERIKNFKK</sequence>
<protein>
    <recommendedName>
        <fullName>Probable methionine--tRNA ligase, cytoplasmic</fullName>
        <ecNumber>6.1.1.10</ecNumber>
    </recommendedName>
    <alternativeName>
        <fullName>Methionyl-tRNA synthetase</fullName>
        <shortName>MetRS</shortName>
    </alternativeName>
</protein>
<proteinExistence type="inferred from homology"/>
<name>SYMC_VAIC1</name>
<feature type="chain" id="PRO_0000388398" description="Probable methionine--tRNA ligase, cytoplasmic">
    <location>
        <begin position="1"/>
        <end position="560"/>
    </location>
</feature>
<feature type="short sequence motif" description="'HIGH' region" evidence="1">
    <location>
        <begin position="16"/>
        <end position="26"/>
    </location>
</feature>
<feature type="short sequence motif" description="'KMSKS' region" evidence="1">
    <location>
        <begin position="347"/>
        <end position="351"/>
    </location>
</feature>
<feature type="binding site" evidence="1">
    <location>
        <position position="350"/>
    </location>
    <ligand>
        <name>ATP</name>
        <dbReference type="ChEBI" id="CHEBI:30616"/>
    </ligand>
</feature>
<dbReference type="EC" id="6.1.1.10"/>
<dbReference type="EMBL" id="ACOL01000084">
    <property type="protein sequence ID" value="EEQ82257.1"/>
    <property type="status" value="ALT_FRAME"/>
    <property type="molecule type" value="Genomic_DNA"/>
</dbReference>
<dbReference type="RefSeq" id="XP_002995928.1">
    <property type="nucleotide sequence ID" value="XM_002995882.1"/>
</dbReference>
<dbReference type="SMR" id="C4V943"/>
<dbReference type="FunCoup" id="C4V943">
    <property type="interactions" value="190"/>
</dbReference>
<dbReference type="STRING" id="578460.C4V943"/>
<dbReference type="KEGG" id="nce:NCER_101052"/>
<dbReference type="HOGENOM" id="CLU_009710_1_2_1"/>
<dbReference type="InParanoid" id="C4V943"/>
<dbReference type="OrthoDB" id="8592at6029"/>
<dbReference type="Proteomes" id="UP000009082">
    <property type="component" value="Unassembled WGS sequence"/>
</dbReference>
<dbReference type="GO" id="GO:0017101">
    <property type="term" value="C:aminoacyl-tRNA synthetase multienzyme complex"/>
    <property type="evidence" value="ECO:0007669"/>
    <property type="project" value="TreeGrafter"/>
</dbReference>
<dbReference type="GO" id="GO:0005829">
    <property type="term" value="C:cytosol"/>
    <property type="evidence" value="ECO:0007669"/>
    <property type="project" value="TreeGrafter"/>
</dbReference>
<dbReference type="GO" id="GO:0005524">
    <property type="term" value="F:ATP binding"/>
    <property type="evidence" value="ECO:0007669"/>
    <property type="project" value="UniProtKB-KW"/>
</dbReference>
<dbReference type="GO" id="GO:0004825">
    <property type="term" value="F:methionine-tRNA ligase activity"/>
    <property type="evidence" value="ECO:0007669"/>
    <property type="project" value="UniProtKB-EC"/>
</dbReference>
<dbReference type="GO" id="GO:0006431">
    <property type="term" value="P:methionyl-tRNA aminoacylation"/>
    <property type="evidence" value="ECO:0007669"/>
    <property type="project" value="InterPro"/>
</dbReference>
<dbReference type="CDD" id="cd00814">
    <property type="entry name" value="MetRS_core"/>
    <property type="match status" value="1"/>
</dbReference>
<dbReference type="Gene3D" id="3.40.50.620">
    <property type="entry name" value="HUPs"/>
    <property type="match status" value="1"/>
</dbReference>
<dbReference type="Gene3D" id="1.10.730.10">
    <property type="entry name" value="Isoleucyl-tRNA Synthetase, Domain 1"/>
    <property type="match status" value="1"/>
</dbReference>
<dbReference type="Gene3D" id="2.20.28.20">
    <property type="entry name" value="Methionyl-tRNA synthetase, Zn-domain"/>
    <property type="match status" value="1"/>
</dbReference>
<dbReference type="InterPro" id="IPR001412">
    <property type="entry name" value="aa-tRNA-synth_I_CS"/>
</dbReference>
<dbReference type="InterPro" id="IPR041872">
    <property type="entry name" value="Anticodon_Met"/>
</dbReference>
<dbReference type="InterPro" id="IPR023458">
    <property type="entry name" value="Met-tRNA_ligase_1"/>
</dbReference>
<dbReference type="InterPro" id="IPR014758">
    <property type="entry name" value="Met-tRNA_synth"/>
</dbReference>
<dbReference type="InterPro" id="IPR015413">
    <property type="entry name" value="Methionyl/Leucyl_tRNA_Synth"/>
</dbReference>
<dbReference type="InterPro" id="IPR033911">
    <property type="entry name" value="MetRS_core"/>
</dbReference>
<dbReference type="InterPro" id="IPR029038">
    <property type="entry name" value="MetRS_Zn"/>
</dbReference>
<dbReference type="InterPro" id="IPR014729">
    <property type="entry name" value="Rossmann-like_a/b/a_fold"/>
</dbReference>
<dbReference type="InterPro" id="IPR009080">
    <property type="entry name" value="tRNAsynth_Ia_anticodon-bd"/>
</dbReference>
<dbReference type="NCBIfam" id="TIGR00398">
    <property type="entry name" value="metG"/>
    <property type="match status" value="1"/>
</dbReference>
<dbReference type="PANTHER" id="PTHR45765">
    <property type="entry name" value="METHIONINE--TRNA LIGASE"/>
    <property type="match status" value="1"/>
</dbReference>
<dbReference type="PANTHER" id="PTHR45765:SF1">
    <property type="entry name" value="METHIONINE--TRNA LIGASE, CYTOPLASMIC"/>
    <property type="match status" value="1"/>
</dbReference>
<dbReference type="Pfam" id="PF19303">
    <property type="entry name" value="Anticodon_3"/>
    <property type="match status" value="1"/>
</dbReference>
<dbReference type="Pfam" id="PF09334">
    <property type="entry name" value="tRNA-synt_1g"/>
    <property type="match status" value="1"/>
</dbReference>
<dbReference type="PRINTS" id="PR01041">
    <property type="entry name" value="TRNASYNTHMET"/>
</dbReference>
<dbReference type="SUPFAM" id="SSF47323">
    <property type="entry name" value="Anticodon-binding domain of a subclass of class I aminoacyl-tRNA synthetases"/>
    <property type="match status" value="1"/>
</dbReference>
<dbReference type="SUPFAM" id="SSF57770">
    <property type="entry name" value="Methionyl-tRNA synthetase (MetRS), Zn-domain"/>
    <property type="match status" value="1"/>
</dbReference>
<dbReference type="SUPFAM" id="SSF52374">
    <property type="entry name" value="Nucleotidylyl transferase"/>
    <property type="match status" value="1"/>
</dbReference>
<dbReference type="PROSITE" id="PS00178">
    <property type="entry name" value="AA_TRNA_LIGASE_I"/>
    <property type="match status" value="1"/>
</dbReference>